<organism>
    <name type="scientific">Thermus thermophilus (strain ATCC 27634 / DSM 579 / HB8)</name>
    <dbReference type="NCBI Taxonomy" id="300852"/>
    <lineage>
        <taxon>Bacteria</taxon>
        <taxon>Thermotogati</taxon>
        <taxon>Deinococcota</taxon>
        <taxon>Deinococci</taxon>
        <taxon>Thermales</taxon>
        <taxon>Thermaceae</taxon>
        <taxon>Thermus</taxon>
    </lineage>
</organism>
<evidence type="ECO:0000255" key="1">
    <source>
        <dbReference type="HAMAP-Rule" id="MF_00945"/>
    </source>
</evidence>
<proteinExistence type="inferred from homology"/>
<keyword id="KW-0963">Cytoplasm</keyword>
<keyword id="KW-1185">Reference proteome</keyword>
<keyword id="KW-0694">RNA-binding</keyword>
<keyword id="KW-0804">Transcription</keyword>
<keyword id="KW-0889">Transcription antitermination</keyword>
<keyword id="KW-0805">Transcription regulation</keyword>
<keyword id="KW-0806">Transcription termination</keyword>
<protein>
    <recommendedName>
        <fullName evidence="1">Transcription termination/antitermination protein NusA</fullName>
    </recommendedName>
</protein>
<sequence length="387" mass="43939">MNREFVEAMQHLALERGVSVEEILEAFKEALRKAYIKRQKGYKKEEIDQGKGPEVDVYIDPNSGRIEMVEVRRVVEKVEDPDKEIALAEALQYDPEVQVGDEMEFPINPEELSRMAIQDLRQILTQRLKESERNRIYNEYKDKEGQVLTGVVTRVDNRGNVFVELGRGEAYLPRSEQIPTEKYHPGQRIKVYLKKVDKSAKGPSLLVSRAHEKLLEHLLKQEVPEIAEGIVEIKAIAREPGRRSKVAVTSHNPNVDPIGACIGHKGQRIQAVSAELGREKVDIILWSKDPKEFIRNALSPAQVGSIELDPEAKKARVKVTKDQHSLAIGTGGQNVRLASKLTGYDIHFEEAEISDLDEALRRAAEEEAEARERKAREEFEKLFRDLG</sequence>
<name>NUSA_THET8</name>
<gene>
    <name evidence="1" type="primary">nusA</name>
    <name type="ordered locus">TTHA0701</name>
</gene>
<accession>P48514</accession>
<accession>Q5SKE2</accession>
<feature type="chain" id="PRO_0000181980" description="Transcription termination/antitermination protein NusA">
    <location>
        <begin position="1"/>
        <end position="387"/>
    </location>
</feature>
<feature type="domain" description="S1 motif" evidence="1">
    <location>
        <begin position="145"/>
        <end position="209"/>
    </location>
</feature>
<feature type="domain" description="KH" evidence="1">
    <location>
        <begin position="312"/>
        <end position="379"/>
    </location>
</feature>
<reference key="1">
    <citation type="journal article" date="1997" name="Biochimie">
        <title>Organization of the Thermus thermophilus nusA/infB operon and overexpression of the infB gene in Escherichia coli.</title>
        <authorList>
            <person name="Vornlocher H.-P."/>
            <person name="Kreutzer R."/>
            <person name="Sprinzl M."/>
        </authorList>
    </citation>
    <scope>NUCLEOTIDE SEQUENCE [GENOMIC DNA]</scope>
</reference>
<reference key="2">
    <citation type="submission" date="2004-11" db="EMBL/GenBank/DDBJ databases">
        <title>Complete genome sequence of Thermus thermophilus HB8.</title>
        <authorList>
            <person name="Masui R."/>
            <person name="Kurokawa K."/>
            <person name="Nakagawa N."/>
            <person name="Tokunaga F."/>
            <person name="Koyama Y."/>
            <person name="Shibata T."/>
            <person name="Oshima T."/>
            <person name="Yokoyama S."/>
            <person name="Yasunaga T."/>
            <person name="Kuramitsu S."/>
        </authorList>
    </citation>
    <scope>NUCLEOTIDE SEQUENCE [LARGE SCALE GENOMIC DNA]</scope>
    <source>
        <strain>ATCC 27634 / DSM 579 / HB8</strain>
    </source>
</reference>
<comment type="function">
    <text evidence="1">Participates in both transcription termination and antitermination.</text>
</comment>
<comment type="subunit">
    <text evidence="1">Monomer. Binds directly to the core enzyme of the DNA-dependent RNA polymerase and to nascent RNA.</text>
</comment>
<comment type="subcellular location">
    <subcellularLocation>
        <location evidence="1">Cytoplasm</location>
    </subcellularLocation>
</comment>
<comment type="similarity">
    <text evidence="1">Belongs to the NusA family.</text>
</comment>
<dbReference type="EMBL" id="Z48001">
    <property type="protein sequence ID" value="CAA88036.1"/>
    <property type="molecule type" value="Genomic_DNA"/>
</dbReference>
<dbReference type="EMBL" id="AP008226">
    <property type="protein sequence ID" value="BAD70524.1"/>
    <property type="molecule type" value="Genomic_DNA"/>
</dbReference>
<dbReference type="PIR" id="S52274">
    <property type="entry name" value="S52274"/>
</dbReference>
<dbReference type="RefSeq" id="WP_011172799.1">
    <property type="nucleotide sequence ID" value="NC_006461.1"/>
</dbReference>
<dbReference type="RefSeq" id="YP_143967.1">
    <property type="nucleotide sequence ID" value="NC_006461.1"/>
</dbReference>
<dbReference type="SMR" id="P48514"/>
<dbReference type="EnsemblBacteria" id="BAD70524">
    <property type="protein sequence ID" value="BAD70524"/>
    <property type="gene ID" value="BAD70524"/>
</dbReference>
<dbReference type="GeneID" id="3168103"/>
<dbReference type="KEGG" id="ttj:TTHA0701"/>
<dbReference type="PATRIC" id="fig|300852.9.peg.695"/>
<dbReference type="eggNOG" id="COG0195">
    <property type="taxonomic scope" value="Bacteria"/>
</dbReference>
<dbReference type="HOGENOM" id="CLU_029242_2_2_0"/>
<dbReference type="PhylomeDB" id="P48514"/>
<dbReference type="Proteomes" id="UP000000532">
    <property type="component" value="Chromosome"/>
</dbReference>
<dbReference type="GO" id="GO:0005829">
    <property type="term" value="C:cytosol"/>
    <property type="evidence" value="ECO:0007669"/>
    <property type="project" value="TreeGrafter"/>
</dbReference>
<dbReference type="GO" id="GO:0003700">
    <property type="term" value="F:DNA-binding transcription factor activity"/>
    <property type="evidence" value="ECO:0007669"/>
    <property type="project" value="InterPro"/>
</dbReference>
<dbReference type="GO" id="GO:0003723">
    <property type="term" value="F:RNA binding"/>
    <property type="evidence" value="ECO:0007669"/>
    <property type="project" value="UniProtKB-UniRule"/>
</dbReference>
<dbReference type="GO" id="GO:0006353">
    <property type="term" value="P:DNA-templated transcription termination"/>
    <property type="evidence" value="ECO:0007669"/>
    <property type="project" value="UniProtKB-UniRule"/>
</dbReference>
<dbReference type="GO" id="GO:0031564">
    <property type="term" value="P:transcription antitermination"/>
    <property type="evidence" value="ECO:0007669"/>
    <property type="project" value="UniProtKB-UniRule"/>
</dbReference>
<dbReference type="CDD" id="cd02134">
    <property type="entry name" value="KH-II_NusA_rpt1"/>
    <property type="match status" value="1"/>
</dbReference>
<dbReference type="CDD" id="cd22529">
    <property type="entry name" value="KH-II_NusA_rpt2"/>
    <property type="match status" value="1"/>
</dbReference>
<dbReference type="CDD" id="cd04455">
    <property type="entry name" value="S1_NusA"/>
    <property type="match status" value="1"/>
</dbReference>
<dbReference type="FunFam" id="2.40.50.140:FF:000058">
    <property type="entry name" value="Transcription termination/antitermination protein NusA"/>
    <property type="match status" value="1"/>
</dbReference>
<dbReference type="FunFam" id="3.30.300.20:FF:000002">
    <property type="entry name" value="Transcription termination/antitermination protein NusA"/>
    <property type="match status" value="1"/>
</dbReference>
<dbReference type="FunFam" id="3.30.300.20:FF:000005">
    <property type="entry name" value="Transcription termination/antitermination protein NusA"/>
    <property type="match status" value="1"/>
</dbReference>
<dbReference type="Gene3D" id="3.30.300.20">
    <property type="match status" value="2"/>
</dbReference>
<dbReference type="Gene3D" id="2.40.50.140">
    <property type="entry name" value="Nucleic acid-binding proteins"/>
    <property type="match status" value="1"/>
</dbReference>
<dbReference type="Gene3D" id="3.30.1480.10">
    <property type="entry name" value="NusA, N-terminal domain"/>
    <property type="match status" value="1"/>
</dbReference>
<dbReference type="HAMAP" id="MF_00945_B">
    <property type="entry name" value="NusA_B"/>
    <property type="match status" value="1"/>
</dbReference>
<dbReference type="InterPro" id="IPR004087">
    <property type="entry name" value="KH_dom"/>
</dbReference>
<dbReference type="InterPro" id="IPR015946">
    <property type="entry name" value="KH_dom-like_a/b"/>
</dbReference>
<dbReference type="InterPro" id="IPR025249">
    <property type="entry name" value="KH_dom_NusA-like"/>
</dbReference>
<dbReference type="InterPro" id="IPR009019">
    <property type="entry name" value="KH_sf_prok-type"/>
</dbReference>
<dbReference type="InterPro" id="IPR012340">
    <property type="entry name" value="NA-bd_OB-fold"/>
</dbReference>
<dbReference type="InterPro" id="IPR030842">
    <property type="entry name" value="NusA_bac"/>
</dbReference>
<dbReference type="InterPro" id="IPR036555">
    <property type="entry name" value="NusA_N_sf"/>
</dbReference>
<dbReference type="InterPro" id="IPR003029">
    <property type="entry name" value="S1_domain"/>
</dbReference>
<dbReference type="InterPro" id="IPR013735">
    <property type="entry name" value="TF_NusA_N"/>
</dbReference>
<dbReference type="InterPro" id="IPR010213">
    <property type="entry name" value="Tscrpt_termination_fac_NusA"/>
</dbReference>
<dbReference type="NCBIfam" id="TIGR01953">
    <property type="entry name" value="NusA"/>
    <property type="match status" value="1"/>
</dbReference>
<dbReference type="PANTHER" id="PTHR22648">
    <property type="entry name" value="TRANSCRIPTION TERMINATION FACTOR NUSA"/>
    <property type="match status" value="1"/>
</dbReference>
<dbReference type="PANTHER" id="PTHR22648:SF0">
    <property type="entry name" value="TRANSCRIPTION TERMINATION_ANTITERMINATION PROTEIN NUSA"/>
    <property type="match status" value="1"/>
</dbReference>
<dbReference type="Pfam" id="PF13184">
    <property type="entry name" value="KH_5"/>
    <property type="match status" value="1"/>
</dbReference>
<dbReference type="Pfam" id="PF08529">
    <property type="entry name" value="NusA_N"/>
    <property type="match status" value="1"/>
</dbReference>
<dbReference type="Pfam" id="PF00575">
    <property type="entry name" value="S1"/>
    <property type="match status" value="1"/>
</dbReference>
<dbReference type="SMART" id="SM00322">
    <property type="entry name" value="KH"/>
    <property type="match status" value="2"/>
</dbReference>
<dbReference type="SMART" id="SM00316">
    <property type="entry name" value="S1"/>
    <property type="match status" value="1"/>
</dbReference>
<dbReference type="SUPFAM" id="SSF50249">
    <property type="entry name" value="Nucleic acid-binding proteins"/>
    <property type="match status" value="1"/>
</dbReference>
<dbReference type="SUPFAM" id="SSF54814">
    <property type="entry name" value="Prokaryotic type KH domain (KH-domain type II)"/>
    <property type="match status" value="2"/>
</dbReference>
<dbReference type="SUPFAM" id="SSF69705">
    <property type="entry name" value="Transcription factor NusA, N-terminal domain"/>
    <property type="match status" value="1"/>
</dbReference>
<dbReference type="PROSITE" id="PS50084">
    <property type="entry name" value="KH_TYPE_1"/>
    <property type="match status" value="1"/>
</dbReference>
<dbReference type="PROSITE" id="PS50126">
    <property type="entry name" value="S1"/>
    <property type="match status" value="1"/>
</dbReference>